<accession>Q7WJ81</accession>
<dbReference type="EC" id="2.4.1.182" evidence="1"/>
<dbReference type="EMBL" id="BX640444">
    <property type="protein sequence ID" value="CAE33111.1"/>
    <property type="molecule type" value="Genomic_DNA"/>
</dbReference>
<dbReference type="RefSeq" id="WP_003811772.1">
    <property type="nucleotide sequence ID" value="NC_002927.3"/>
</dbReference>
<dbReference type="SMR" id="Q7WJ81"/>
<dbReference type="CAZy" id="GT19">
    <property type="family name" value="Glycosyltransferase Family 19"/>
</dbReference>
<dbReference type="GeneID" id="93203299"/>
<dbReference type="KEGG" id="bbr:BB2618"/>
<dbReference type="eggNOG" id="COG0763">
    <property type="taxonomic scope" value="Bacteria"/>
</dbReference>
<dbReference type="HOGENOM" id="CLU_036577_3_0_4"/>
<dbReference type="UniPathway" id="UPA00973"/>
<dbReference type="Proteomes" id="UP000001027">
    <property type="component" value="Chromosome"/>
</dbReference>
<dbReference type="GO" id="GO:0016020">
    <property type="term" value="C:membrane"/>
    <property type="evidence" value="ECO:0007669"/>
    <property type="project" value="GOC"/>
</dbReference>
<dbReference type="GO" id="GO:0008915">
    <property type="term" value="F:lipid-A-disaccharide synthase activity"/>
    <property type="evidence" value="ECO:0007669"/>
    <property type="project" value="UniProtKB-UniRule"/>
</dbReference>
<dbReference type="GO" id="GO:0005543">
    <property type="term" value="F:phospholipid binding"/>
    <property type="evidence" value="ECO:0007669"/>
    <property type="project" value="TreeGrafter"/>
</dbReference>
<dbReference type="GO" id="GO:0009245">
    <property type="term" value="P:lipid A biosynthetic process"/>
    <property type="evidence" value="ECO:0007669"/>
    <property type="project" value="UniProtKB-UniRule"/>
</dbReference>
<dbReference type="CDD" id="cd01635">
    <property type="entry name" value="Glycosyltransferase_GTB-type"/>
    <property type="match status" value="1"/>
</dbReference>
<dbReference type="HAMAP" id="MF_00392">
    <property type="entry name" value="LpxB"/>
    <property type="match status" value="1"/>
</dbReference>
<dbReference type="InterPro" id="IPR003835">
    <property type="entry name" value="Glyco_trans_19"/>
</dbReference>
<dbReference type="NCBIfam" id="TIGR00215">
    <property type="entry name" value="lpxB"/>
    <property type="match status" value="1"/>
</dbReference>
<dbReference type="PANTHER" id="PTHR30372">
    <property type="entry name" value="LIPID-A-DISACCHARIDE SYNTHASE"/>
    <property type="match status" value="1"/>
</dbReference>
<dbReference type="PANTHER" id="PTHR30372:SF4">
    <property type="entry name" value="LIPID-A-DISACCHARIDE SYNTHASE, MITOCHONDRIAL-RELATED"/>
    <property type="match status" value="1"/>
</dbReference>
<dbReference type="Pfam" id="PF02684">
    <property type="entry name" value="LpxB"/>
    <property type="match status" value="1"/>
</dbReference>
<dbReference type="SUPFAM" id="SSF53756">
    <property type="entry name" value="UDP-Glycosyltransferase/glycogen phosphorylase"/>
    <property type="match status" value="1"/>
</dbReference>
<proteinExistence type="inferred from homology"/>
<reference key="1">
    <citation type="journal article" date="2003" name="Nat. Genet.">
        <title>Comparative analysis of the genome sequences of Bordetella pertussis, Bordetella parapertussis and Bordetella bronchiseptica.</title>
        <authorList>
            <person name="Parkhill J."/>
            <person name="Sebaihia M."/>
            <person name="Preston A."/>
            <person name="Murphy L.D."/>
            <person name="Thomson N.R."/>
            <person name="Harris D.E."/>
            <person name="Holden M.T.G."/>
            <person name="Churcher C.M."/>
            <person name="Bentley S.D."/>
            <person name="Mungall K.L."/>
            <person name="Cerdeno-Tarraga A.-M."/>
            <person name="Temple L."/>
            <person name="James K.D."/>
            <person name="Harris B."/>
            <person name="Quail M.A."/>
            <person name="Achtman M."/>
            <person name="Atkin R."/>
            <person name="Baker S."/>
            <person name="Basham D."/>
            <person name="Bason N."/>
            <person name="Cherevach I."/>
            <person name="Chillingworth T."/>
            <person name="Collins M."/>
            <person name="Cronin A."/>
            <person name="Davis P."/>
            <person name="Doggett J."/>
            <person name="Feltwell T."/>
            <person name="Goble A."/>
            <person name="Hamlin N."/>
            <person name="Hauser H."/>
            <person name="Holroyd S."/>
            <person name="Jagels K."/>
            <person name="Leather S."/>
            <person name="Moule S."/>
            <person name="Norberczak H."/>
            <person name="O'Neil S."/>
            <person name="Ormond D."/>
            <person name="Price C."/>
            <person name="Rabbinowitsch E."/>
            <person name="Rutter S."/>
            <person name="Sanders M."/>
            <person name="Saunders D."/>
            <person name="Seeger K."/>
            <person name="Sharp S."/>
            <person name="Simmonds M."/>
            <person name="Skelton J."/>
            <person name="Squares R."/>
            <person name="Squares S."/>
            <person name="Stevens K."/>
            <person name="Unwin L."/>
            <person name="Whitehead S."/>
            <person name="Barrell B.G."/>
            <person name="Maskell D.J."/>
        </authorList>
    </citation>
    <scope>NUCLEOTIDE SEQUENCE [LARGE SCALE GENOMIC DNA]</scope>
    <source>
        <strain>ATCC BAA-588 / NCTC 13252 / RB50</strain>
    </source>
</reference>
<feature type="chain" id="PRO_0000190152" description="Lipid-A-disaccharide synthase">
    <location>
        <begin position="1"/>
        <end position="393"/>
    </location>
</feature>
<protein>
    <recommendedName>
        <fullName evidence="1">Lipid-A-disaccharide synthase</fullName>
        <ecNumber evidence="1">2.4.1.182</ecNumber>
    </recommendedName>
</protein>
<evidence type="ECO:0000255" key="1">
    <source>
        <dbReference type="HAMAP-Rule" id="MF_00392"/>
    </source>
</evidence>
<keyword id="KW-0328">Glycosyltransferase</keyword>
<keyword id="KW-0441">Lipid A biosynthesis</keyword>
<keyword id="KW-0444">Lipid biosynthesis</keyword>
<keyword id="KW-0443">Lipid metabolism</keyword>
<keyword id="KW-0808">Transferase</keyword>
<name>LPXB_BORBR</name>
<comment type="function">
    <text evidence="1">Condensation of UDP-2,3-diacylglucosamine and 2,3-diacylglucosamine-1-phosphate to form lipid A disaccharide, a precursor of lipid A, a phosphorylated glycolipid that anchors the lipopolysaccharide to the outer membrane of the cell.</text>
</comment>
<comment type="catalytic activity">
    <reaction evidence="1">
        <text>a lipid X + a UDP-2-N,3-O-bis[(3R)-3-hydroxyacyl]-alpha-D-glucosamine = a lipid A disaccharide + UDP + H(+)</text>
        <dbReference type="Rhea" id="RHEA:67828"/>
        <dbReference type="ChEBI" id="CHEBI:15378"/>
        <dbReference type="ChEBI" id="CHEBI:58223"/>
        <dbReference type="ChEBI" id="CHEBI:137748"/>
        <dbReference type="ChEBI" id="CHEBI:176338"/>
        <dbReference type="ChEBI" id="CHEBI:176343"/>
        <dbReference type="EC" id="2.4.1.182"/>
    </reaction>
</comment>
<comment type="pathway">
    <text evidence="1">Bacterial outer membrane biogenesis; LPS lipid A biosynthesis.</text>
</comment>
<comment type="similarity">
    <text evidence="1">Belongs to the LpxB family.</text>
</comment>
<sequence>MSLRIGMVAGEPSGDLLAGRIIAGLQARAPGVHCAGIGGPQMAARGFEAWHPMHALTVFGYIDAFKRIPSLLSTYGDVKRRLLAEPPSVFVGIDAPDFNLRLEHQLRQAGTPTVHFVGPSIWAWRYERINKIRAAVSHMLVLFPFEEALYRKEGIPVTYVGHPLAGVIPMQPDRAAARARLGIDADARVLAILPGSRSSEIRLLAPRFLQAAAELVRRDPRLQCVVPMVNPQRRAEFEAIAAQHPVPGLRCVTAAEGQGETPVAWSVMEASNAVLVASGTATLETALYKRPMVISYVLSPWMRRIMAWKSGQQRPYLPWVGLPNVLLRDFAVPELLQDEATPAALAEATWQALTDEAGAARIEARFTALHQDLLRDTPALAAQAILEVADGAA</sequence>
<organism>
    <name type="scientific">Bordetella bronchiseptica (strain ATCC BAA-588 / NCTC 13252 / RB50)</name>
    <name type="common">Alcaligenes bronchisepticus</name>
    <dbReference type="NCBI Taxonomy" id="257310"/>
    <lineage>
        <taxon>Bacteria</taxon>
        <taxon>Pseudomonadati</taxon>
        <taxon>Pseudomonadota</taxon>
        <taxon>Betaproteobacteria</taxon>
        <taxon>Burkholderiales</taxon>
        <taxon>Alcaligenaceae</taxon>
        <taxon>Bordetella</taxon>
    </lineage>
</organism>
<gene>
    <name evidence="1" type="primary">lpxB</name>
    <name type="synonym">pgsB</name>
    <name type="ordered locus">BB2618</name>
</gene>